<proteinExistence type="evidence at transcript level"/>
<feature type="chain" id="PRO_0000121265" description="Ras-related protein Rab-18">
    <location>
        <begin position="1"/>
        <end position="202"/>
    </location>
</feature>
<feature type="short sequence motif" description="Effector region" evidence="1">
    <location>
        <begin position="38"/>
        <end position="46"/>
    </location>
</feature>
<feature type="binding site" evidence="2">
    <location>
        <position position="18"/>
    </location>
    <ligand>
        <name>GTP</name>
        <dbReference type="ChEBI" id="CHEBI:37565"/>
    </ligand>
</feature>
<feature type="binding site" evidence="2">
    <location>
        <position position="21"/>
    </location>
    <ligand>
        <name>GTP</name>
        <dbReference type="ChEBI" id="CHEBI:37565"/>
    </ligand>
</feature>
<feature type="binding site" evidence="2">
    <location>
        <position position="22"/>
    </location>
    <ligand>
        <name>GTP</name>
        <dbReference type="ChEBI" id="CHEBI:37565"/>
    </ligand>
</feature>
<feature type="binding site" evidence="2">
    <location>
        <position position="23"/>
    </location>
    <ligand>
        <name>GTP</name>
        <dbReference type="ChEBI" id="CHEBI:37565"/>
    </ligand>
</feature>
<feature type="binding site" evidence="2">
    <location>
        <position position="24"/>
    </location>
    <ligand>
        <name>GTP</name>
        <dbReference type="ChEBI" id="CHEBI:37565"/>
    </ligand>
</feature>
<feature type="binding site" evidence="2">
    <location>
        <position position="35"/>
    </location>
    <ligand>
        <name>GTP</name>
        <dbReference type="ChEBI" id="CHEBI:37565"/>
    </ligand>
</feature>
<feature type="binding site" evidence="2">
    <location>
        <position position="36"/>
    </location>
    <ligand>
        <name>GTP</name>
        <dbReference type="ChEBI" id="CHEBI:37565"/>
    </ligand>
</feature>
<feature type="binding site" evidence="2">
    <location>
        <position position="41"/>
    </location>
    <ligand>
        <name>GTP</name>
        <dbReference type="ChEBI" id="CHEBI:37565"/>
    </ligand>
</feature>
<feature type="binding site" evidence="2">
    <location>
        <position position="67"/>
    </location>
    <ligand>
        <name>GTP</name>
        <dbReference type="ChEBI" id="CHEBI:37565"/>
    </ligand>
</feature>
<feature type="binding site" evidence="2">
    <location>
        <position position="124"/>
    </location>
    <ligand>
        <name>GTP</name>
        <dbReference type="ChEBI" id="CHEBI:37565"/>
    </ligand>
</feature>
<feature type="binding site" evidence="2">
    <location>
        <position position="126"/>
    </location>
    <ligand>
        <name>GTP</name>
        <dbReference type="ChEBI" id="CHEBI:37565"/>
    </ligand>
</feature>
<feature type="binding site" evidence="2">
    <location>
        <position position="153"/>
    </location>
    <ligand>
        <name>GTP</name>
        <dbReference type="ChEBI" id="CHEBI:37565"/>
    </ligand>
</feature>
<feature type="lipid moiety-binding region" description="S-geranylgeranyl cysteine" evidence="1">
    <location>
        <position position="198"/>
    </location>
</feature>
<feature type="lipid moiety-binding region" description="S-geranylgeranyl cysteine" evidence="1">
    <location>
        <position position="200"/>
    </location>
</feature>
<keyword id="KW-1003">Cell membrane</keyword>
<keyword id="KW-0342">GTP-binding</keyword>
<keyword id="KW-0378">Hydrolase</keyword>
<keyword id="KW-0449">Lipoprotein</keyword>
<keyword id="KW-0472">Membrane</keyword>
<keyword id="KW-0547">Nucleotide-binding</keyword>
<keyword id="KW-0636">Prenylation</keyword>
<keyword id="KW-0653">Protein transport</keyword>
<keyword id="KW-0813">Transport</keyword>
<organism>
    <name type="scientific">Lymnaea stagnalis</name>
    <name type="common">Great pond snail</name>
    <name type="synonym">Helix stagnalis</name>
    <dbReference type="NCBI Taxonomy" id="6523"/>
    <lineage>
        <taxon>Eukaryota</taxon>
        <taxon>Metazoa</taxon>
        <taxon>Spiralia</taxon>
        <taxon>Lophotrochozoa</taxon>
        <taxon>Mollusca</taxon>
        <taxon>Gastropoda</taxon>
        <taxon>Heterobranchia</taxon>
        <taxon>Euthyneura</taxon>
        <taxon>Panpulmonata</taxon>
        <taxon>Hygrophila</taxon>
        <taxon>Lymnaeoidea</taxon>
        <taxon>Lymnaeidae</taxon>
        <taxon>Lymnaea</taxon>
    </lineage>
</organism>
<sequence length="202" mass="22619">MEEQEIITTLKILIIGESGVGKSSLLLRFTEDTFDPEQAATIGVDFKVKTLTVEGNKTKLAIWDTAGQERFRTLTPSYYRGAQGVILVYDVSSKQSFNKLDAWLNELETFSTKHDMVKMLVGNKIDRANHEVTKDEGLKFARKHHMLFIEASAKTNDGVQCAFEELVEKIIQTPGLWETSSKNLTLSNHGPEGQGQSCYCVL</sequence>
<evidence type="ECO:0000250" key="1"/>
<evidence type="ECO:0000250" key="2">
    <source>
        <dbReference type="UniProtKB" id="Q9NP72"/>
    </source>
</evidence>
<evidence type="ECO:0000305" key="3"/>
<protein>
    <recommendedName>
        <fullName>Ras-related protein Rab-18</fullName>
        <ecNumber evidence="2">3.6.5.2</ecNumber>
    </recommendedName>
    <alternativeName>
        <fullName>Ras-related protein Rab-18A</fullName>
    </alternativeName>
</protein>
<dbReference type="EC" id="3.6.5.2" evidence="2"/>
<dbReference type="EMBL" id="X72690">
    <property type="protein sequence ID" value="CAA51235.1"/>
    <property type="molecule type" value="mRNA"/>
</dbReference>
<dbReference type="PIR" id="S38340">
    <property type="entry name" value="S38340"/>
</dbReference>
<dbReference type="SMR" id="Q05976"/>
<dbReference type="GO" id="GO:0005886">
    <property type="term" value="C:plasma membrane"/>
    <property type="evidence" value="ECO:0007669"/>
    <property type="project" value="UniProtKB-SubCell"/>
</dbReference>
<dbReference type="GO" id="GO:0005525">
    <property type="term" value="F:GTP binding"/>
    <property type="evidence" value="ECO:0007669"/>
    <property type="project" value="UniProtKB-KW"/>
</dbReference>
<dbReference type="GO" id="GO:0003924">
    <property type="term" value="F:GTPase activity"/>
    <property type="evidence" value="ECO:0000250"/>
    <property type="project" value="UniProtKB"/>
</dbReference>
<dbReference type="GO" id="GO:0015031">
    <property type="term" value="P:protein transport"/>
    <property type="evidence" value="ECO:0007669"/>
    <property type="project" value="UniProtKB-KW"/>
</dbReference>
<dbReference type="CDD" id="cd01863">
    <property type="entry name" value="Rab18"/>
    <property type="match status" value="1"/>
</dbReference>
<dbReference type="FunFam" id="3.40.50.300:FF:000430">
    <property type="entry name" value="Probable Ras-related protein Rab-18"/>
    <property type="match status" value="1"/>
</dbReference>
<dbReference type="Gene3D" id="3.40.50.300">
    <property type="entry name" value="P-loop containing nucleotide triphosphate hydrolases"/>
    <property type="match status" value="1"/>
</dbReference>
<dbReference type="InterPro" id="IPR027417">
    <property type="entry name" value="P-loop_NTPase"/>
</dbReference>
<dbReference type="InterPro" id="IPR050227">
    <property type="entry name" value="Rab"/>
</dbReference>
<dbReference type="InterPro" id="IPR025662">
    <property type="entry name" value="Sigma_54_int_dom_ATP-bd_1"/>
</dbReference>
<dbReference type="InterPro" id="IPR005225">
    <property type="entry name" value="Small_GTP-bd"/>
</dbReference>
<dbReference type="InterPro" id="IPR001806">
    <property type="entry name" value="Small_GTPase"/>
</dbReference>
<dbReference type="NCBIfam" id="TIGR00231">
    <property type="entry name" value="small_GTP"/>
    <property type="match status" value="1"/>
</dbReference>
<dbReference type="PANTHER" id="PTHR47977">
    <property type="entry name" value="RAS-RELATED PROTEIN RAB"/>
    <property type="match status" value="1"/>
</dbReference>
<dbReference type="Pfam" id="PF00071">
    <property type="entry name" value="Ras"/>
    <property type="match status" value="1"/>
</dbReference>
<dbReference type="PRINTS" id="PR00449">
    <property type="entry name" value="RASTRNSFRMNG"/>
</dbReference>
<dbReference type="SMART" id="SM00177">
    <property type="entry name" value="ARF"/>
    <property type="match status" value="1"/>
</dbReference>
<dbReference type="SMART" id="SM00175">
    <property type="entry name" value="RAB"/>
    <property type="match status" value="1"/>
</dbReference>
<dbReference type="SMART" id="SM00176">
    <property type="entry name" value="RAN"/>
    <property type="match status" value="1"/>
</dbReference>
<dbReference type="SMART" id="SM00173">
    <property type="entry name" value="RAS"/>
    <property type="match status" value="1"/>
</dbReference>
<dbReference type="SMART" id="SM00174">
    <property type="entry name" value="RHO"/>
    <property type="match status" value="1"/>
</dbReference>
<dbReference type="SUPFAM" id="SSF52540">
    <property type="entry name" value="P-loop containing nucleoside triphosphate hydrolases"/>
    <property type="match status" value="1"/>
</dbReference>
<dbReference type="PROSITE" id="PS51419">
    <property type="entry name" value="RAB"/>
    <property type="match status" value="1"/>
</dbReference>
<name>RB18A_LYMST</name>
<gene>
    <name type="primary">RAB18A</name>
</gene>
<comment type="function">
    <text evidence="2">The small GTPases Rab are key regulators of intracellular membrane trafficking, from the formation of transport vesicles to their fusion with membranes. Rabs cycle between an inactive GDP-bound form and an active GTP-bound form that is able to recruit to membranes different sets of downstream effectors directly responsible for vesicle formation, movement, tethering and fusion.</text>
</comment>
<comment type="catalytic activity">
    <reaction evidence="2">
        <text>GTP + H2O = GDP + phosphate + H(+)</text>
        <dbReference type="Rhea" id="RHEA:19669"/>
        <dbReference type="ChEBI" id="CHEBI:15377"/>
        <dbReference type="ChEBI" id="CHEBI:15378"/>
        <dbReference type="ChEBI" id="CHEBI:37565"/>
        <dbReference type="ChEBI" id="CHEBI:43474"/>
        <dbReference type="ChEBI" id="CHEBI:58189"/>
        <dbReference type="EC" id="3.6.5.2"/>
    </reaction>
    <physiologicalReaction direction="left-to-right" evidence="2">
        <dbReference type="Rhea" id="RHEA:19670"/>
    </physiologicalReaction>
</comment>
<comment type="subcellular location">
    <subcellularLocation>
        <location evidence="3">Cell membrane</location>
        <topology evidence="3">Lipid-anchor</topology>
        <orientation evidence="3">Cytoplasmic side</orientation>
    </subcellularLocation>
</comment>
<comment type="similarity">
    <text evidence="3">Belongs to the small GTPase superfamily. Rab family.</text>
</comment>
<accession>Q05976</accession>
<reference key="1">
    <citation type="journal article" date="1993" name="Eur. J. Biochem.">
        <title>Isolation and characterization of three cDNAs coding for Rab proteins from the albumen gland of the mollusc Lymnaea stagnalis.</title>
        <authorList>
            <person name="Agterberg M."/>
            <person name="van Die I."/>
            <person name="Yang H."/>
            <person name="Andriessen J.A."/>
            <person name="van Tetering A."/>
            <person name="van den Eijnden D.H."/>
            <person name="Ploegh H.L."/>
        </authorList>
    </citation>
    <scope>NUCLEOTIDE SEQUENCE [MRNA]</scope>
</reference>